<sequence>MTDVWRLAIFVLMVNVLNDQVSCSGPPGPVGYPGVPGVPGPRGPPGQPGAAGRPGDPGPKGPSVKCPCRERSAFTVKFSGRLPPPSEPVVFTEVLYNTQRDLKESTGVFNCVEPGNYHFSFDVELYHCKVKIGLMKNHIQVMEKHQLSKNEYENASGAMIMPLRQGDKVWLEADVETEEPDQAKVVIYFSGFLISS</sequence>
<dbReference type="EMBL" id="D12974">
    <property type="protein sequence ID" value="BAA02351.1"/>
    <property type="molecule type" value="mRNA"/>
</dbReference>
<dbReference type="PIR" id="A48150">
    <property type="entry name" value="A48150"/>
</dbReference>
<dbReference type="SMR" id="Q06575"/>
<dbReference type="GO" id="GO:0005581">
    <property type="term" value="C:collagen trimer"/>
    <property type="evidence" value="ECO:0007669"/>
    <property type="project" value="UniProtKB-KW"/>
</dbReference>
<dbReference type="GO" id="GO:0005576">
    <property type="term" value="C:extracellular region"/>
    <property type="evidence" value="ECO:0007669"/>
    <property type="project" value="UniProtKB-SubCell"/>
</dbReference>
<dbReference type="GO" id="GO:0042750">
    <property type="term" value="P:hibernation"/>
    <property type="evidence" value="ECO:0007669"/>
    <property type="project" value="UniProtKB-KW"/>
</dbReference>
<dbReference type="Gene3D" id="2.60.120.40">
    <property type="match status" value="1"/>
</dbReference>
<dbReference type="InterPro" id="IPR001073">
    <property type="entry name" value="C1q_dom"/>
</dbReference>
<dbReference type="InterPro" id="IPR008160">
    <property type="entry name" value="Collagen"/>
</dbReference>
<dbReference type="InterPro" id="IPR050392">
    <property type="entry name" value="Collagen/C1q_domain"/>
</dbReference>
<dbReference type="InterPro" id="IPR008983">
    <property type="entry name" value="Tumour_necrosis_fac-like_dom"/>
</dbReference>
<dbReference type="PANTHER" id="PTHR15427">
    <property type="entry name" value="EMILIN ELASTIN MICROFIBRIL INTERFACE-LOCATED PROTEIN ELASTIN MICROFIBRIL INTERFACER"/>
    <property type="match status" value="1"/>
</dbReference>
<dbReference type="PANTHER" id="PTHR15427:SF32">
    <property type="entry name" value="PROTEIN HP-20 HOMOLOG"/>
    <property type="match status" value="1"/>
</dbReference>
<dbReference type="Pfam" id="PF00386">
    <property type="entry name" value="C1q"/>
    <property type="match status" value="1"/>
</dbReference>
<dbReference type="Pfam" id="PF01391">
    <property type="entry name" value="Collagen"/>
    <property type="match status" value="1"/>
</dbReference>
<dbReference type="PRINTS" id="PR00007">
    <property type="entry name" value="COMPLEMNTC1Q"/>
</dbReference>
<dbReference type="SMART" id="SM00110">
    <property type="entry name" value="C1Q"/>
    <property type="match status" value="1"/>
</dbReference>
<dbReference type="SUPFAM" id="SSF49842">
    <property type="entry name" value="TNF-like"/>
    <property type="match status" value="1"/>
</dbReference>
<dbReference type="PROSITE" id="PS50871">
    <property type="entry name" value="C1Q"/>
    <property type="match status" value="1"/>
</dbReference>
<proteinExistence type="evidence at protein level"/>
<comment type="function">
    <text>Plasma proteins HP-20, HP-25, HP-27 and HP-55 form a 140 kDa complex via disulfide bonds in the plasma and are hibernation specific.</text>
</comment>
<comment type="subcellular location">
    <subcellularLocation>
        <location>Secreted</location>
    </subcellularLocation>
</comment>
<comment type="tissue specificity">
    <text>Plasma; synthesized in the liver.</text>
</comment>
<comment type="developmental stage">
    <text>The protein complex disappears from the plasma at onset of hibernation and reappears as hibernation ceases.</text>
</comment>
<evidence type="ECO:0000255" key="1">
    <source>
        <dbReference type="PROSITE-ProRule" id="PRU00368"/>
    </source>
</evidence>
<evidence type="ECO:0000256" key="2">
    <source>
        <dbReference type="SAM" id="MobiDB-lite"/>
    </source>
</evidence>
<evidence type="ECO:0000269" key="3">
    <source>
    </source>
</evidence>
<name>HP20_TAMSI</name>
<feature type="signal peptide" evidence="3">
    <location>
        <begin position="1"/>
        <end position="23"/>
    </location>
</feature>
<feature type="chain" id="PRO_0000003558" description="Hibernation-associated plasma protein HP-20">
    <location>
        <begin position="24"/>
        <end position="196"/>
    </location>
</feature>
<feature type="domain" description="Collagen-like">
    <location>
        <begin position="25"/>
        <end position="63"/>
    </location>
</feature>
<feature type="domain" description="C1q" evidence="1">
    <location>
        <begin position="67"/>
        <end position="196"/>
    </location>
</feature>
<feature type="region of interest" description="Disordered" evidence="2">
    <location>
        <begin position="28"/>
        <end position="64"/>
    </location>
</feature>
<feature type="compositionally biased region" description="Pro residues" evidence="2">
    <location>
        <begin position="28"/>
        <end position="47"/>
    </location>
</feature>
<organism>
    <name type="scientific">Tamias sibiricus</name>
    <name type="common">Siberian chipmunk</name>
    <name type="synonym">Eutamias sibiricus</name>
    <dbReference type="NCBI Taxonomy" id="64680"/>
    <lineage>
        <taxon>Eukaryota</taxon>
        <taxon>Metazoa</taxon>
        <taxon>Chordata</taxon>
        <taxon>Craniata</taxon>
        <taxon>Vertebrata</taxon>
        <taxon>Euteleostomi</taxon>
        <taxon>Mammalia</taxon>
        <taxon>Eutheria</taxon>
        <taxon>Euarchontoglires</taxon>
        <taxon>Glires</taxon>
        <taxon>Rodentia</taxon>
        <taxon>Sciuromorpha</taxon>
        <taxon>Sciuridae</taxon>
        <taxon>Xerinae</taxon>
        <taxon>Marmotini</taxon>
        <taxon>Tamias</taxon>
    </lineage>
</organism>
<accession>Q06575</accession>
<keyword id="KW-0176">Collagen</keyword>
<keyword id="KW-0903">Direct protein sequencing</keyword>
<keyword id="KW-0909">Hibernation</keyword>
<keyword id="KW-0964">Secreted</keyword>
<keyword id="KW-0732">Signal</keyword>
<reference key="1">
    <citation type="journal article" date="1993" name="Mol. Cell. Biol.">
        <title>Hibernation-associated gene regulation of plasma proteins with a collagen-like domain in mammalian hibernators.</title>
        <authorList>
            <person name="Takamatsu N."/>
            <person name="Ohba K."/>
            <person name="Kondo J."/>
            <person name="Kondo N."/>
            <person name="Shiba T."/>
        </authorList>
    </citation>
    <scope>NUCLEOTIDE SEQUENCE [MRNA]</scope>
    <source>
        <tissue>Liver</tissue>
    </source>
</reference>
<reference key="2">
    <citation type="journal article" date="1992" name="J. Biol. Chem.">
        <title>Identification of novel blood proteins specific for mammalian hibernation.</title>
        <authorList>
            <person name="Kondo N."/>
            <person name="Kondo J."/>
        </authorList>
    </citation>
    <scope>PROTEIN SEQUENCE OF 24-58; 66-99; 104-129; 132-136 AND 150-184</scope>
    <source>
        <tissue>Plasma</tissue>
    </source>
</reference>
<protein>
    <recommendedName>
        <fullName>Hibernation-associated plasma protein HP-20</fullName>
    </recommendedName>
    <alternativeName>
        <fullName>Hibernator-specific blood complex 20 kDa subunit</fullName>
    </alternativeName>
</protein>